<organism>
    <name type="scientific">Salmonella typhimurium (strain LT2 / SGSC1412 / ATCC 700720)</name>
    <dbReference type="NCBI Taxonomy" id="99287"/>
    <lineage>
        <taxon>Bacteria</taxon>
        <taxon>Pseudomonadati</taxon>
        <taxon>Pseudomonadota</taxon>
        <taxon>Gammaproteobacteria</taxon>
        <taxon>Enterobacterales</taxon>
        <taxon>Enterobacteriaceae</taxon>
        <taxon>Salmonella</taxon>
    </lineage>
</organism>
<name>CCMA1_SALTY</name>
<sequence length="205" mass="22322">MLEARDLYCERDERTLFRGLSFTVDAGEWVQVTGGNGAGKTTLLRLLTGLARPDGGEVYWQGEPLRRVRDSFHRSLLWIGHQPGIKTRLTARENLHFFHPGDGARLPEALAQAGLAGFEDVPVAQLSAGQQRRVALARLWLTRAALWVLDEPFTAIDVNGVARLTRRMAAHTAQGGMVILTTHQPLPGAADTVRRLALTGGGAGL</sequence>
<dbReference type="EC" id="7.6.2.5" evidence="1"/>
<dbReference type="EMBL" id="AE006468">
    <property type="protein sequence ID" value="AAL22678.1"/>
    <property type="molecule type" value="Genomic_DNA"/>
</dbReference>
<dbReference type="SMR" id="Q8ZKZ9"/>
<dbReference type="STRING" id="99287.STM3819"/>
<dbReference type="PaxDb" id="99287-STM3819"/>
<dbReference type="KEGG" id="stm:STM3819"/>
<dbReference type="PATRIC" id="fig|99287.12.peg.4043"/>
<dbReference type="HOGENOM" id="CLU_000604_1_2_6"/>
<dbReference type="PhylomeDB" id="Q8ZKZ9"/>
<dbReference type="BioCyc" id="SENT99287:STM3819-MONOMER"/>
<dbReference type="Proteomes" id="UP000001014">
    <property type="component" value="Chromosome"/>
</dbReference>
<dbReference type="GO" id="GO:0005886">
    <property type="term" value="C:plasma membrane"/>
    <property type="evidence" value="ECO:0007669"/>
    <property type="project" value="UniProtKB-SubCell"/>
</dbReference>
<dbReference type="GO" id="GO:0015439">
    <property type="term" value="F:ABC-type heme transporter activity"/>
    <property type="evidence" value="ECO:0007669"/>
    <property type="project" value="UniProtKB-EC"/>
</dbReference>
<dbReference type="GO" id="GO:0005524">
    <property type="term" value="F:ATP binding"/>
    <property type="evidence" value="ECO:0007669"/>
    <property type="project" value="UniProtKB-KW"/>
</dbReference>
<dbReference type="GO" id="GO:0016887">
    <property type="term" value="F:ATP hydrolysis activity"/>
    <property type="evidence" value="ECO:0007669"/>
    <property type="project" value="InterPro"/>
</dbReference>
<dbReference type="GO" id="GO:0017004">
    <property type="term" value="P:cytochrome complex assembly"/>
    <property type="evidence" value="ECO:0007669"/>
    <property type="project" value="UniProtKB-KW"/>
</dbReference>
<dbReference type="CDD" id="cd03231">
    <property type="entry name" value="ABC_CcmA_heme_exporter"/>
    <property type="match status" value="1"/>
</dbReference>
<dbReference type="Gene3D" id="3.40.50.300">
    <property type="entry name" value="P-loop containing nucleotide triphosphate hydrolases"/>
    <property type="match status" value="1"/>
</dbReference>
<dbReference type="InterPro" id="IPR003593">
    <property type="entry name" value="AAA+_ATPase"/>
</dbReference>
<dbReference type="InterPro" id="IPR003439">
    <property type="entry name" value="ABC_transporter-like_ATP-bd"/>
</dbReference>
<dbReference type="InterPro" id="IPR017871">
    <property type="entry name" value="ABC_transporter-like_CS"/>
</dbReference>
<dbReference type="InterPro" id="IPR005895">
    <property type="entry name" value="ABC_transptr_haem_export_CcmA"/>
</dbReference>
<dbReference type="InterPro" id="IPR027417">
    <property type="entry name" value="P-loop_NTPase"/>
</dbReference>
<dbReference type="NCBIfam" id="TIGR01189">
    <property type="entry name" value="ccmA"/>
    <property type="match status" value="1"/>
</dbReference>
<dbReference type="NCBIfam" id="NF010061">
    <property type="entry name" value="PRK13538.1"/>
    <property type="match status" value="1"/>
</dbReference>
<dbReference type="PANTHER" id="PTHR43499">
    <property type="entry name" value="ABC TRANSPORTER I FAMILY MEMBER 1"/>
    <property type="match status" value="1"/>
</dbReference>
<dbReference type="PANTHER" id="PTHR43499:SF1">
    <property type="entry name" value="ABC TRANSPORTER I FAMILY MEMBER 1"/>
    <property type="match status" value="1"/>
</dbReference>
<dbReference type="Pfam" id="PF00005">
    <property type="entry name" value="ABC_tran"/>
    <property type="match status" value="1"/>
</dbReference>
<dbReference type="SMART" id="SM00382">
    <property type="entry name" value="AAA"/>
    <property type="match status" value="1"/>
</dbReference>
<dbReference type="SUPFAM" id="SSF52540">
    <property type="entry name" value="P-loop containing nucleoside triphosphate hydrolases"/>
    <property type="match status" value="1"/>
</dbReference>
<dbReference type="PROSITE" id="PS00211">
    <property type="entry name" value="ABC_TRANSPORTER_1"/>
    <property type="match status" value="1"/>
</dbReference>
<dbReference type="PROSITE" id="PS50893">
    <property type="entry name" value="ABC_TRANSPORTER_2"/>
    <property type="match status" value="1"/>
</dbReference>
<dbReference type="PROSITE" id="PS51243">
    <property type="entry name" value="CCMA"/>
    <property type="match status" value="1"/>
</dbReference>
<feature type="chain" id="PRO_0000092212" description="Cytochrome c biogenesis ATP-binding export protein CcmA 1">
    <location>
        <begin position="1"/>
        <end position="205"/>
    </location>
</feature>
<feature type="domain" description="ABC transporter" evidence="1">
    <location>
        <begin position="2"/>
        <end position="205"/>
    </location>
</feature>
<feature type="binding site" evidence="1">
    <location>
        <begin position="34"/>
        <end position="41"/>
    </location>
    <ligand>
        <name>ATP</name>
        <dbReference type="ChEBI" id="CHEBI:30616"/>
    </ligand>
</feature>
<reference key="1">
    <citation type="journal article" date="2001" name="Nature">
        <title>Complete genome sequence of Salmonella enterica serovar Typhimurium LT2.</title>
        <authorList>
            <person name="McClelland M."/>
            <person name="Sanderson K.E."/>
            <person name="Spieth J."/>
            <person name="Clifton S.W."/>
            <person name="Latreille P."/>
            <person name="Courtney L."/>
            <person name="Porwollik S."/>
            <person name="Ali J."/>
            <person name="Dante M."/>
            <person name="Du F."/>
            <person name="Hou S."/>
            <person name="Layman D."/>
            <person name="Leonard S."/>
            <person name="Nguyen C."/>
            <person name="Scott K."/>
            <person name="Holmes A."/>
            <person name="Grewal N."/>
            <person name="Mulvaney E."/>
            <person name="Ryan E."/>
            <person name="Sun H."/>
            <person name="Florea L."/>
            <person name="Miller W."/>
            <person name="Stoneking T."/>
            <person name="Nhan M."/>
            <person name="Waterston R."/>
            <person name="Wilson R.K."/>
        </authorList>
    </citation>
    <scope>NUCLEOTIDE SEQUENCE [LARGE SCALE GENOMIC DNA]</scope>
    <source>
        <strain>LT2 / SGSC1412 / ATCC 700720</strain>
    </source>
</reference>
<gene>
    <name evidence="1" type="primary">ccmA1</name>
    <name type="ordered locus">STM3819</name>
</gene>
<evidence type="ECO:0000255" key="1">
    <source>
        <dbReference type="HAMAP-Rule" id="MF_01707"/>
    </source>
</evidence>
<keyword id="KW-0067">ATP-binding</keyword>
<keyword id="KW-0997">Cell inner membrane</keyword>
<keyword id="KW-1003">Cell membrane</keyword>
<keyword id="KW-0201">Cytochrome c-type biogenesis</keyword>
<keyword id="KW-0472">Membrane</keyword>
<keyword id="KW-0547">Nucleotide-binding</keyword>
<keyword id="KW-1185">Reference proteome</keyword>
<keyword id="KW-1278">Translocase</keyword>
<keyword id="KW-0813">Transport</keyword>
<comment type="function">
    <text evidence="1">Part of the ABC transporter complex CcmAB involved in the biogenesis of c-type cytochromes; once thought to export heme, this seems not to be the case, but its exact role is uncertain. Responsible for energy coupling to the transport system.</text>
</comment>
<comment type="catalytic activity">
    <reaction evidence="1">
        <text>heme b(in) + ATP + H2O = heme b(out) + ADP + phosphate + H(+)</text>
        <dbReference type="Rhea" id="RHEA:19261"/>
        <dbReference type="ChEBI" id="CHEBI:15377"/>
        <dbReference type="ChEBI" id="CHEBI:15378"/>
        <dbReference type="ChEBI" id="CHEBI:30616"/>
        <dbReference type="ChEBI" id="CHEBI:43474"/>
        <dbReference type="ChEBI" id="CHEBI:60344"/>
        <dbReference type="ChEBI" id="CHEBI:456216"/>
        <dbReference type="EC" id="7.6.2.5"/>
    </reaction>
</comment>
<comment type="subunit">
    <text evidence="1">The complex is composed of two ATP-binding proteins (CcmA) and two transmembrane proteins (CcmB).</text>
</comment>
<comment type="subcellular location">
    <subcellularLocation>
        <location evidence="1">Cell inner membrane</location>
        <topology evidence="1">Peripheral membrane protein</topology>
    </subcellularLocation>
</comment>
<comment type="similarity">
    <text evidence="1">Belongs to the ABC transporter superfamily. CcmA exporter (TC 3.A.1.107) family.</text>
</comment>
<protein>
    <recommendedName>
        <fullName evidence="1">Cytochrome c biogenesis ATP-binding export protein CcmA 1</fullName>
        <ecNumber evidence="1">7.6.2.5</ecNumber>
    </recommendedName>
    <alternativeName>
        <fullName evidence="1">Heme exporter protein A 1</fullName>
    </alternativeName>
</protein>
<proteinExistence type="inferred from homology"/>
<accession>Q8ZKZ9</accession>